<dbReference type="EC" id="2.8.1.10" evidence="1"/>
<dbReference type="EMBL" id="AY123045">
    <property type="protein sequence ID" value="AAN04534.1"/>
    <property type="status" value="ALT_INIT"/>
    <property type="molecule type" value="Genomic_DNA"/>
</dbReference>
<dbReference type="EMBL" id="FP236829">
    <property type="protein sequence ID" value="CAX53415.1"/>
    <property type="molecule type" value="Genomic_DNA"/>
</dbReference>
<dbReference type="RefSeq" id="NP_758746.1">
    <property type="nucleotide sequence ID" value="NC_004445.1"/>
</dbReference>
<dbReference type="RefSeq" id="WP_012814638.1">
    <property type="nucleotide sequence ID" value="NC_013263.1"/>
</dbReference>
<dbReference type="SMR" id="Q8GEI4"/>
<dbReference type="GeneID" id="92238879"/>
<dbReference type="KEGG" id="epy:EpC_pEp360130"/>
<dbReference type="HOGENOM" id="CLU_062233_1_0_6"/>
<dbReference type="UniPathway" id="UPA00060"/>
<dbReference type="Proteomes" id="UP000007061">
    <property type="component" value="Plasmid pEP36"/>
</dbReference>
<dbReference type="GO" id="GO:0005737">
    <property type="term" value="C:cytoplasm"/>
    <property type="evidence" value="ECO:0007669"/>
    <property type="project" value="UniProtKB-SubCell"/>
</dbReference>
<dbReference type="GO" id="GO:1990107">
    <property type="term" value="F:thiazole synthase activity"/>
    <property type="evidence" value="ECO:0007669"/>
    <property type="project" value="UniProtKB-EC"/>
</dbReference>
<dbReference type="GO" id="GO:0009229">
    <property type="term" value="P:thiamine diphosphate biosynthetic process"/>
    <property type="evidence" value="ECO:0007669"/>
    <property type="project" value="UniProtKB-UniRule"/>
</dbReference>
<dbReference type="CDD" id="cd04728">
    <property type="entry name" value="ThiG"/>
    <property type="match status" value="1"/>
</dbReference>
<dbReference type="Gene3D" id="3.20.20.70">
    <property type="entry name" value="Aldolase class I"/>
    <property type="match status" value="1"/>
</dbReference>
<dbReference type="HAMAP" id="MF_00443">
    <property type="entry name" value="ThiG"/>
    <property type="match status" value="1"/>
</dbReference>
<dbReference type="InterPro" id="IPR013785">
    <property type="entry name" value="Aldolase_TIM"/>
</dbReference>
<dbReference type="InterPro" id="IPR033983">
    <property type="entry name" value="Thiazole_synthase_ThiG"/>
</dbReference>
<dbReference type="InterPro" id="IPR008867">
    <property type="entry name" value="ThiG"/>
</dbReference>
<dbReference type="PANTHER" id="PTHR34266">
    <property type="entry name" value="THIAZOLE SYNTHASE"/>
    <property type="match status" value="1"/>
</dbReference>
<dbReference type="PANTHER" id="PTHR34266:SF2">
    <property type="entry name" value="THIAZOLE SYNTHASE"/>
    <property type="match status" value="1"/>
</dbReference>
<dbReference type="Pfam" id="PF05690">
    <property type="entry name" value="ThiG"/>
    <property type="match status" value="1"/>
</dbReference>
<dbReference type="SUPFAM" id="SSF110399">
    <property type="entry name" value="ThiG-like"/>
    <property type="match status" value="1"/>
</dbReference>
<sequence>MFYDFVPQSRFLLGTAGYPSPQILQQAVMASESEIITVSLRREGSQGGAFRELLTQLNKRILPNTAGCHTVKEAVTTAHMARELFNTRWIKLEVIGHADTLQPDPFALVEAARILCADGFQVFPYTTEDLILGEKLLEAGCELLMPWGAPIGSGQGLRNIEGLRSMRLWFKDIPLIIDAGIGAPSQAAQAMEMGFDGILLNTAVARAQDPLRMAQAFAAAVRAGYDAHGAGLIERRDMATASTPIFGMAQFS</sequence>
<proteinExistence type="inferred from homology"/>
<keyword id="KW-0963">Cytoplasm</keyword>
<keyword id="KW-0614">Plasmid</keyword>
<keyword id="KW-0704">Schiff base</keyword>
<keyword id="KW-0784">Thiamine biosynthesis</keyword>
<keyword id="KW-0808">Transferase</keyword>
<comment type="function">
    <text evidence="1">Catalyzes the rearrangement of 1-deoxy-D-xylulose 5-phosphate (DXP) to produce the thiazole phosphate moiety of thiamine. Sulfur is provided by the thiocarboxylate moiety of the carrier protein ThiS. In vitro, sulfur can be provided by H(2)S.</text>
</comment>
<comment type="catalytic activity">
    <reaction evidence="1">
        <text>[ThiS sulfur-carrier protein]-C-terminal-Gly-aminoethanethioate + 2-iminoacetate + 1-deoxy-D-xylulose 5-phosphate = [ThiS sulfur-carrier protein]-C-terminal Gly-Gly + 2-[(2R,5Z)-2-carboxy-4-methylthiazol-5(2H)-ylidene]ethyl phosphate + 2 H2O + H(+)</text>
        <dbReference type="Rhea" id="RHEA:26297"/>
        <dbReference type="Rhea" id="RHEA-COMP:12909"/>
        <dbReference type="Rhea" id="RHEA-COMP:19908"/>
        <dbReference type="ChEBI" id="CHEBI:15377"/>
        <dbReference type="ChEBI" id="CHEBI:15378"/>
        <dbReference type="ChEBI" id="CHEBI:57792"/>
        <dbReference type="ChEBI" id="CHEBI:62899"/>
        <dbReference type="ChEBI" id="CHEBI:77846"/>
        <dbReference type="ChEBI" id="CHEBI:90778"/>
        <dbReference type="ChEBI" id="CHEBI:232372"/>
        <dbReference type="EC" id="2.8.1.10"/>
    </reaction>
</comment>
<comment type="pathway">
    <text evidence="1">Cofactor biosynthesis; thiamine diphosphate biosynthesis.</text>
</comment>
<comment type="subunit">
    <text evidence="1">Homotetramer. Forms heterodimers with either ThiH or ThiS.</text>
</comment>
<comment type="subcellular location">
    <subcellularLocation>
        <location evidence="1">Cytoplasm</location>
    </subcellularLocation>
</comment>
<comment type="similarity">
    <text evidence="1">Belongs to the ThiG family.</text>
</comment>
<comment type="sequence caution" evidence="2">
    <conflict type="erroneous initiation">
        <sequence resource="EMBL-CDS" id="AAN04534"/>
    </conflict>
    <text>Extended N-terminus.</text>
</comment>
<feature type="chain" id="PRO_0000162820" description="Thiazole synthase">
    <location>
        <begin position="1"/>
        <end position="252"/>
    </location>
</feature>
<feature type="active site" description="Schiff-base intermediate with DXP" evidence="1">
    <location>
        <position position="91"/>
    </location>
</feature>
<feature type="binding site" evidence="1">
    <location>
        <position position="152"/>
    </location>
    <ligand>
        <name>1-deoxy-D-xylulose 5-phosphate</name>
        <dbReference type="ChEBI" id="CHEBI:57792"/>
    </ligand>
</feature>
<feature type="binding site" evidence="1">
    <location>
        <begin position="179"/>
        <end position="180"/>
    </location>
    <ligand>
        <name>1-deoxy-D-xylulose 5-phosphate</name>
        <dbReference type="ChEBI" id="CHEBI:57792"/>
    </ligand>
</feature>
<feature type="binding site" evidence="1">
    <location>
        <begin position="201"/>
        <end position="202"/>
    </location>
    <ligand>
        <name>1-deoxy-D-xylulose 5-phosphate</name>
        <dbReference type="ChEBI" id="CHEBI:57792"/>
    </ligand>
</feature>
<gene>
    <name evidence="1" type="primary">thiG</name>
    <name type="ordered locus">EpC_pEp360130</name>
</gene>
<geneLocation type="plasmid">
    <name>pEP36</name>
</geneLocation>
<protein>
    <recommendedName>
        <fullName evidence="1">Thiazole synthase</fullName>
        <ecNumber evidence="1">2.8.1.10</ecNumber>
    </recommendedName>
</protein>
<accession>Q8GEI4</accession>
<accession>C8ZLR4</accession>
<reference key="1">
    <citation type="journal article" date="2002" name="Appl. Environ. Microbiol.">
        <title>Relatedness of chromosomal and plasmid DNAs of Erwinia pyrifoliae and Erwinia amylovora.</title>
        <authorList>
            <person name="McGhee G.C."/>
            <person name="Schnabel E.L."/>
            <person name="Maxson-Stein K."/>
            <person name="Jones B."/>
            <person name="Stromberg V.K."/>
            <person name="Lacy G.H."/>
            <person name="Jones A.L."/>
        </authorList>
    </citation>
    <scope>NUCLEOTIDE SEQUENCE [GENOMIC DNA]</scope>
    <source>
        <strain>DSM 12162 / Ep1/96</strain>
    </source>
</reference>
<reference key="2">
    <citation type="journal article" date="2010" name="BMC Genomics">
        <title>Genome comparison of the epiphytic bacteria Erwinia billingiae and E. tasmaniensis with the pear pathogen E. pyrifoliae.</title>
        <authorList>
            <person name="Kube M."/>
            <person name="Migdoll A.M."/>
            <person name="Gehring I."/>
            <person name="Heitmann K."/>
            <person name="Mayer Y."/>
            <person name="Kuhl H."/>
            <person name="Knaust F."/>
            <person name="Geider K."/>
            <person name="Reinhardt R."/>
        </authorList>
    </citation>
    <scope>NUCLEOTIDE SEQUENCE [LARGE SCALE GENOMIC DNA]</scope>
    <source>
        <strain>DSM 12162 / Ep1/96</strain>
    </source>
</reference>
<evidence type="ECO:0000255" key="1">
    <source>
        <dbReference type="HAMAP-Rule" id="MF_00443"/>
    </source>
</evidence>
<evidence type="ECO:0000305" key="2"/>
<organism>
    <name type="scientific">Erwinia pyrifoliae (strain DSM 12162 / Ep1/96)</name>
    <dbReference type="NCBI Taxonomy" id="634499"/>
    <lineage>
        <taxon>Bacteria</taxon>
        <taxon>Pseudomonadati</taxon>
        <taxon>Pseudomonadota</taxon>
        <taxon>Gammaproteobacteria</taxon>
        <taxon>Enterobacterales</taxon>
        <taxon>Erwiniaceae</taxon>
        <taxon>Erwinia</taxon>
    </lineage>
</organism>
<name>THIG_ERWPE</name>